<accession>Q6QA76</accession>
<proteinExistence type="evidence at transcript level"/>
<protein>
    <recommendedName>
        <fullName>PDZ domain-containing protein 11</fullName>
    </recommendedName>
</protein>
<gene>
    <name type="primary">PDZD11</name>
    <name type="synonym">PDZK11</name>
</gene>
<dbReference type="EMBL" id="AY550924">
    <property type="protein sequence ID" value="AAS59062.1"/>
    <property type="molecule type" value="mRNA"/>
</dbReference>
<dbReference type="RefSeq" id="NP_001001630.1">
    <property type="nucleotide sequence ID" value="NM_001001630.1"/>
</dbReference>
<dbReference type="RefSeq" id="XP_013846370.1">
    <property type="nucleotide sequence ID" value="XM_013990916.2"/>
</dbReference>
<dbReference type="SMR" id="Q6QA76"/>
<dbReference type="FunCoup" id="Q6QA76">
    <property type="interactions" value="403"/>
</dbReference>
<dbReference type="STRING" id="9823.ENSSSCP00000029576"/>
<dbReference type="PaxDb" id="9823-ENSSSCP00000013173"/>
<dbReference type="PeptideAtlas" id="Q6QA76"/>
<dbReference type="Ensembl" id="ENSSSCT00015050930.1">
    <property type="protein sequence ID" value="ENSSSCP00015020329.1"/>
    <property type="gene ID" value="ENSSSCG00015038016.1"/>
</dbReference>
<dbReference type="Ensembl" id="ENSSSCT00025091274.1">
    <property type="protein sequence ID" value="ENSSSCP00025040034.1"/>
    <property type="gene ID" value="ENSSSCG00025066463.1"/>
</dbReference>
<dbReference type="Ensembl" id="ENSSSCT00030053109.1">
    <property type="protein sequence ID" value="ENSSSCP00030024234.1"/>
    <property type="gene ID" value="ENSSSCG00030038120.1"/>
</dbReference>
<dbReference type="Ensembl" id="ENSSSCT00035075080.1">
    <property type="protein sequence ID" value="ENSSSCP00035030518.1"/>
    <property type="gene ID" value="ENSSSCG00035056247.1"/>
</dbReference>
<dbReference type="Ensembl" id="ENSSSCT00040023831.1">
    <property type="protein sequence ID" value="ENSSSCP00040010101.1"/>
    <property type="gene ID" value="ENSSSCG00040017645.1"/>
</dbReference>
<dbReference type="Ensembl" id="ENSSSCT00045029181.1">
    <property type="protein sequence ID" value="ENSSSCP00045020215.1"/>
    <property type="gene ID" value="ENSSSCG00045017147.1"/>
</dbReference>
<dbReference type="Ensembl" id="ENSSSCT00050057215.1">
    <property type="protein sequence ID" value="ENSSSCP00050024423.1"/>
    <property type="gene ID" value="ENSSSCG00050042119.1"/>
</dbReference>
<dbReference type="Ensembl" id="ENSSSCT00055035867.1">
    <property type="protein sequence ID" value="ENSSSCP00055028488.1"/>
    <property type="gene ID" value="ENSSSCG00055018326.1"/>
</dbReference>
<dbReference type="Ensembl" id="ENSSSCT00060012592.1">
    <property type="protein sequence ID" value="ENSSSCP00060004761.1"/>
    <property type="gene ID" value="ENSSSCG00060009727.1"/>
</dbReference>
<dbReference type="Ensembl" id="ENSSSCT00065082626.1">
    <property type="protein sequence ID" value="ENSSSCP00065035992.1"/>
    <property type="gene ID" value="ENSSSCG00065060313.1"/>
</dbReference>
<dbReference type="Ensembl" id="ENSSSCT00070054957.1">
    <property type="protein sequence ID" value="ENSSSCP00070046618.1"/>
    <property type="gene ID" value="ENSSSCG00070027385.1"/>
</dbReference>
<dbReference type="Ensembl" id="ENSSSCT00070054965.1">
    <property type="protein sequence ID" value="ENSSSCP00070046625.1"/>
    <property type="gene ID" value="ENSSSCG00070027385.1"/>
</dbReference>
<dbReference type="Ensembl" id="ENSSSCT00085014333">
    <property type="protein sequence ID" value="ENSSSCP00085010332"/>
    <property type="gene ID" value="ENSSSCG00085007514"/>
</dbReference>
<dbReference type="Ensembl" id="ENSSSCT00090008603">
    <property type="protein sequence ID" value="ENSSSCP00090005159"/>
    <property type="gene ID" value="ENSSSCG00090004936"/>
</dbReference>
<dbReference type="Ensembl" id="ENSSSCT00105035866">
    <property type="protein sequence ID" value="ENSSSCP00105024961"/>
    <property type="gene ID" value="ENSSSCG00105018678"/>
</dbReference>
<dbReference type="Ensembl" id="ENSSSCT00115002061">
    <property type="protein sequence ID" value="ENSSSCP00115001919"/>
    <property type="gene ID" value="ENSSSCG00115001223"/>
</dbReference>
<dbReference type="Ensembl" id="ENSSSCT00130046646">
    <property type="protein sequence ID" value="ENSSSCP00130032786"/>
    <property type="gene ID" value="ENSSSCG00130024107"/>
</dbReference>
<dbReference type="GeneID" id="414386"/>
<dbReference type="KEGG" id="ssc:414386"/>
<dbReference type="CTD" id="51248"/>
<dbReference type="eggNOG" id="KOG3528">
    <property type="taxonomic scope" value="Eukaryota"/>
</dbReference>
<dbReference type="InParanoid" id="Q6QA76"/>
<dbReference type="OMA" id="RGGREHN"/>
<dbReference type="OrthoDB" id="6021951at2759"/>
<dbReference type="TreeFam" id="TF318964"/>
<dbReference type="Reactome" id="R-SSC-196780">
    <property type="pathway name" value="Biotin transport and metabolism"/>
</dbReference>
<dbReference type="Reactome" id="R-SSC-199220">
    <property type="pathway name" value="Vitamin B5 (pantothenate) metabolism"/>
</dbReference>
<dbReference type="Reactome" id="R-SSC-425397">
    <property type="pathway name" value="Transport of vitamins, nucleosides, and related molecules"/>
</dbReference>
<dbReference type="Reactome" id="R-SSC-6803544">
    <property type="pathway name" value="Ion influx/efflux at host-pathogen interface"/>
</dbReference>
<dbReference type="Reactome" id="R-SSC-936837">
    <property type="pathway name" value="Ion transport by P-type ATPases"/>
</dbReference>
<dbReference type="Proteomes" id="UP000008227">
    <property type="component" value="Unplaced"/>
</dbReference>
<dbReference type="Proteomes" id="UP000314985">
    <property type="component" value="Unassembled WGS sequence"/>
</dbReference>
<dbReference type="Proteomes" id="UP000694570">
    <property type="component" value="Unplaced"/>
</dbReference>
<dbReference type="Proteomes" id="UP000694571">
    <property type="component" value="Unplaced"/>
</dbReference>
<dbReference type="Proteomes" id="UP000694720">
    <property type="component" value="Unplaced"/>
</dbReference>
<dbReference type="Proteomes" id="UP000694722">
    <property type="component" value="Unplaced"/>
</dbReference>
<dbReference type="Proteomes" id="UP000694723">
    <property type="component" value="Unplaced"/>
</dbReference>
<dbReference type="Proteomes" id="UP000694724">
    <property type="component" value="Unplaced"/>
</dbReference>
<dbReference type="Proteomes" id="UP000694725">
    <property type="component" value="Unplaced"/>
</dbReference>
<dbReference type="Proteomes" id="UP000694726">
    <property type="component" value="Unplaced"/>
</dbReference>
<dbReference type="Proteomes" id="UP000694727">
    <property type="component" value="Unplaced"/>
</dbReference>
<dbReference type="Proteomes" id="UP000694728">
    <property type="component" value="Unplaced"/>
</dbReference>
<dbReference type="Bgee" id="ENSSSCG00000012378">
    <property type="expression patterns" value="Expressed in adult mammalian kidney and 45 other cell types or tissues"/>
</dbReference>
<dbReference type="ExpressionAtlas" id="Q6QA76">
    <property type="expression patterns" value="baseline and differential"/>
</dbReference>
<dbReference type="GO" id="GO:0005912">
    <property type="term" value="C:adherens junction"/>
    <property type="evidence" value="ECO:0007669"/>
    <property type="project" value="UniProtKB-SubCell"/>
</dbReference>
<dbReference type="GO" id="GO:0016323">
    <property type="term" value="C:basolateral plasma membrane"/>
    <property type="evidence" value="ECO:0000250"/>
    <property type="project" value="UniProtKB"/>
</dbReference>
<dbReference type="GO" id="GO:0005911">
    <property type="term" value="C:cell-cell junction"/>
    <property type="evidence" value="ECO:0000318"/>
    <property type="project" value="GO_Central"/>
</dbReference>
<dbReference type="GO" id="GO:0005829">
    <property type="term" value="C:cytosol"/>
    <property type="evidence" value="ECO:0000250"/>
    <property type="project" value="UniProtKB"/>
</dbReference>
<dbReference type="GO" id="GO:0098793">
    <property type="term" value="C:presynapse"/>
    <property type="evidence" value="ECO:0007669"/>
    <property type="project" value="GOC"/>
</dbReference>
<dbReference type="GO" id="GO:0030674">
    <property type="term" value="F:protein-macromolecule adaptor activity"/>
    <property type="evidence" value="ECO:0000318"/>
    <property type="project" value="GO_Central"/>
</dbReference>
<dbReference type="GO" id="GO:0007269">
    <property type="term" value="P:neurotransmitter secretion"/>
    <property type="evidence" value="ECO:0000318"/>
    <property type="project" value="GO_Central"/>
</dbReference>
<dbReference type="GO" id="GO:0046931">
    <property type="term" value="P:pore complex assembly"/>
    <property type="evidence" value="ECO:0000318"/>
    <property type="project" value="GO_Central"/>
</dbReference>
<dbReference type="GO" id="GO:0008582">
    <property type="term" value="P:regulation of synaptic assembly at neuromuscular junction"/>
    <property type="evidence" value="ECO:0000318"/>
    <property type="project" value="GO_Central"/>
</dbReference>
<dbReference type="GO" id="GO:0048489">
    <property type="term" value="P:synaptic vesicle transport"/>
    <property type="evidence" value="ECO:0000318"/>
    <property type="project" value="GO_Central"/>
</dbReference>
<dbReference type="CDD" id="cd06752">
    <property type="entry name" value="PDZ_PDZD11-like"/>
    <property type="match status" value="1"/>
</dbReference>
<dbReference type="FunFam" id="2.30.42.10:FF:000096">
    <property type="entry name" value="PDZ domain-containing protein 11"/>
    <property type="match status" value="1"/>
</dbReference>
<dbReference type="Gene3D" id="2.30.42.10">
    <property type="match status" value="1"/>
</dbReference>
<dbReference type="InterPro" id="IPR051109">
    <property type="entry name" value="MAM_complex_regulator"/>
</dbReference>
<dbReference type="InterPro" id="IPR001478">
    <property type="entry name" value="PDZ"/>
</dbReference>
<dbReference type="InterPro" id="IPR036034">
    <property type="entry name" value="PDZ_sf"/>
</dbReference>
<dbReference type="PANTHER" id="PTHR14063">
    <property type="entry name" value="PROTEIN LIN-7 HOMOLOG"/>
    <property type="match status" value="1"/>
</dbReference>
<dbReference type="Pfam" id="PF00595">
    <property type="entry name" value="PDZ"/>
    <property type="match status" value="1"/>
</dbReference>
<dbReference type="SMART" id="SM00228">
    <property type="entry name" value="PDZ"/>
    <property type="match status" value="1"/>
</dbReference>
<dbReference type="SUPFAM" id="SSF50156">
    <property type="entry name" value="PDZ domain-like"/>
    <property type="match status" value="1"/>
</dbReference>
<dbReference type="PROSITE" id="PS50106">
    <property type="entry name" value="PDZ"/>
    <property type="match status" value="1"/>
</dbReference>
<comment type="function">
    <text evidence="1">Mediates docking of ADAM10 to zonula adherens by interacting with PLEKHA7 which is required for PLEKHA7 to interact with the ADAM10-binding protein TSPAN33.</text>
</comment>
<comment type="subunit">
    <text evidence="1">Interacts with ATP2B1, ATP2B2, ATP2B3, ATP2B4 and ATP7A (By similarity). Interacts with PLEKHA7 (via WW domains) at zonula adherens; this interaction is essential for the interaction between PLEKHA7 and the ADAM10-binding protein TSPAN33 (By similarity). Interacts with SLC5A6 (By similarity).</text>
</comment>
<comment type="subcellular location">
    <subcellularLocation>
        <location evidence="1">Cytoplasm</location>
    </subcellularLocation>
    <subcellularLocation>
        <location evidence="2">Cell junction</location>
        <location evidence="2">Adherens junction</location>
    </subcellularLocation>
    <subcellularLocation>
        <location evidence="2">Cell membrane</location>
    </subcellularLocation>
</comment>
<feature type="chain" id="PRO_0000058275" description="PDZ domain-containing protein 11">
    <location>
        <begin position="1"/>
        <end position="140"/>
    </location>
</feature>
<feature type="domain" description="PDZ" evidence="3">
    <location>
        <begin position="47"/>
        <end position="129"/>
    </location>
</feature>
<sequence>MDSRIPYDDYPVVFLPAYENPPAWIPPHERVYHPDYNNELTQFLPRIVTLKKPPGAQLGFNIRGGKASQLGIFISKVIPDSDAHRAGLQEGDQVLAVNDVDFQDIEHSKAVEILKTAREISMRVRFFPYNYHRQKERTVH</sequence>
<keyword id="KW-0965">Cell junction</keyword>
<keyword id="KW-1003">Cell membrane</keyword>
<keyword id="KW-0963">Cytoplasm</keyword>
<keyword id="KW-0472">Membrane</keyword>
<keyword id="KW-1185">Reference proteome</keyword>
<organism>
    <name type="scientific">Sus scrofa</name>
    <name type="common">Pig</name>
    <dbReference type="NCBI Taxonomy" id="9823"/>
    <lineage>
        <taxon>Eukaryota</taxon>
        <taxon>Metazoa</taxon>
        <taxon>Chordata</taxon>
        <taxon>Craniata</taxon>
        <taxon>Vertebrata</taxon>
        <taxon>Euteleostomi</taxon>
        <taxon>Mammalia</taxon>
        <taxon>Eutheria</taxon>
        <taxon>Laurasiatheria</taxon>
        <taxon>Artiodactyla</taxon>
        <taxon>Suina</taxon>
        <taxon>Suidae</taxon>
        <taxon>Sus</taxon>
    </lineage>
</organism>
<evidence type="ECO:0000250" key="1">
    <source>
        <dbReference type="UniProtKB" id="Q5EBL8"/>
    </source>
</evidence>
<evidence type="ECO:0000250" key="2">
    <source>
        <dbReference type="UniProtKB" id="Q9CZG9"/>
    </source>
</evidence>
<evidence type="ECO:0000255" key="3">
    <source>
        <dbReference type="PROSITE-ProRule" id="PRU00143"/>
    </source>
</evidence>
<name>PDZ11_PIG</name>
<reference key="1">
    <citation type="submission" date="2004-02" db="EMBL/GenBank/DDBJ databases">
        <title>Identification of differentially expressed genes in porcine embryos.</title>
        <authorList>
            <person name="Lee H.Y."/>
            <person name="Cui X.S."/>
            <person name="Jeong Y.J."/>
            <person name="Shin M.L."/>
            <person name="Hwang K.C."/>
            <person name="Kim N.H."/>
        </authorList>
    </citation>
    <scope>NUCLEOTIDE SEQUENCE [MRNA]</scope>
</reference>